<gene>
    <name evidence="4" type="primary">LEC6</name>
    <name evidence="7" type="ordered locus">MTR_5g031100</name>
    <name evidence="8" type="ORF">MtrunA17_Chr5g0411741</name>
</gene>
<protein>
    <recommendedName>
        <fullName evidence="4">Lectin 6</fullName>
        <shortName evidence="4">MtLec6</shortName>
    </recommendedName>
    <alternativeName>
        <fullName evidence="5">Agglutinin LEC6</fullName>
    </alternativeName>
</protein>
<keyword id="KW-0325">Glycoprotein</keyword>
<keyword id="KW-0430">Lectin</keyword>
<keyword id="KW-1185">Reference proteome</keyword>
<keyword id="KW-0732">Signal</keyword>
<organism>
    <name type="scientific">Medicago truncatula</name>
    <name type="common">Barrel medic</name>
    <name type="synonym">Medicago tribuloides</name>
    <dbReference type="NCBI Taxonomy" id="3880"/>
    <lineage>
        <taxon>Eukaryota</taxon>
        <taxon>Viridiplantae</taxon>
        <taxon>Streptophyta</taxon>
        <taxon>Embryophyta</taxon>
        <taxon>Tracheophyta</taxon>
        <taxon>Spermatophyta</taxon>
        <taxon>Magnoliopsida</taxon>
        <taxon>eudicotyledons</taxon>
        <taxon>Gunneridae</taxon>
        <taxon>Pentapetalae</taxon>
        <taxon>rosids</taxon>
        <taxon>fabids</taxon>
        <taxon>Fabales</taxon>
        <taxon>Fabaceae</taxon>
        <taxon>Papilionoideae</taxon>
        <taxon>50 kb inversion clade</taxon>
        <taxon>NPAAA clade</taxon>
        <taxon>Hologalegina</taxon>
        <taxon>IRL clade</taxon>
        <taxon>Trifolieae</taxon>
        <taxon>Medicago</taxon>
    </lineage>
</organism>
<sequence>MTLSSALIKIFITFLFLQNHVNSQYSSPSKPQPSLGSTISFSITKFDDESPNIFVKGDTSISNGVLSLTKTDKYSGKPLQKSVGHATHLTPIHIWDETSGELADFSTSFSFIVNTNGSSLHGDGFTFFLGPLHFDLPKNSSGGYLGLFNPETALIASQNPIVAIEFDSFTNGWDPASPSQYTHIGIDVGSIDSVSTADWPLNVLPRNALGEARINYNSESKRLSAFVDYPGLGESTGVSFVVDLRSVLPEWVRVGFSAATGELVETHDIINWSFEAAL</sequence>
<feature type="signal peptide" evidence="1">
    <location>
        <begin position="1"/>
        <end position="23"/>
    </location>
</feature>
<feature type="chain" id="PRO_5014566291" description="Lectin 6">
    <location>
        <begin position="24"/>
        <end position="278"/>
    </location>
</feature>
<feature type="glycosylation site" description="N-linked (GlcNAc...) asparagine" evidence="2">
    <location>
        <position position="116"/>
    </location>
</feature>
<feature type="glycosylation site" description="N-linked (GlcNAc...) asparagine" evidence="2">
    <location>
        <position position="139"/>
    </location>
</feature>
<feature type="glycosylation site" description="N-linked (GlcNAc...) asparagine" evidence="2">
    <location>
        <position position="271"/>
    </location>
</feature>
<feature type="sequence conflict" description="In Ref. 1; ABC47812." evidence="5" ref="1">
    <original>A</original>
    <variation>T</variation>
    <location>
        <position position="276"/>
    </location>
</feature>
<reference key="1">
    <citation type="journal article" date="2005" name="Mol. Plant Microbe Interact.">
        <title>Combined transcriptome profiling reveals a novel family of arbuscular mycorrhizal-specific Medicago truncatula lectin genes.</title>
        <authorList>
            <person name="Frenzel A."/>
            <person name="Manthey K."/>
            <person name="Perlick A.M."/>
            <person name="Meyer F."/>
            <person name="Puehler A."/>
            <person name="Kuester H."/>
            <person name="Krajinski F."/>
        </authorList>
    </citation>
    <scope>NUCLEOTIDE SEQUENCE [MRNA]</scope>
    <scope>INDUCTION BY ARBUSCULAR MYCORRHIZAL FUNGI</scope>
    <source>
        <strain>cv. Jemalong A17</strain>
    </source>
</reference>
<reference key="2">
    <citation type="journal article" date="2005" name="Mol. Genet. Genomics">
        <title>Significant microsynteny with new evolutionary highlights is detected between Arabidopsis and legume model plants despite the lack of macrosynteny.</title>
        <authorList>
            <person name="Kevei Z."/>
            <person name="Seres A."/>
            <person name="Kereszt A."/>
            <person name="Kalo P."/>
            <person name="Kiss P."/>
            <person name="Toth G."/>
            <person name="Endre G."/>
            <person name="Kiss G.B."/>
        </authorList>
    </citation>
    <scope>NUCLEOTIDE SEQUENCE [LARGE SCALE GENOMIC DNA]</scope>
    <source>
        <strain>cv. Jemalong A17</strain>
    </source>
</reference>
<reference key="3">
    <citation type="journal article" date="2011" name="Nature">
        <title>The Medicago genome provides insight into the evolution of rhizobial symbioses.</title>
        <authorList>
            <person name="Young N.D."/>
            <person name="Debelle F."/>
            <person name="Oldroyd G.E.D."/>
            <person name="Geurts R."/>
            <person name="Cannon S.B."/>
            <person name="Udvardi M.K."/>
            <person name="Benedito V.A."/>
            <person name="Mayer K.F.X."/>
            <person name="Gouzy J."/>
            <person name="Schoof H."/>
            <person name="Van de Peer Y."/>
            <person name="Proost S."/>
            <person name="Cook D.R."/>
            <person name="Meyers B.C."/>
            <person name="Spannagl M."/>
            <person name="Cheung F."/>
            <person name="De Mita S."/>
            <person name="Krishnakumar V."/>
            <person name="Gundlach H."/>
            <person name="Zhou S."/>
            <person name="Mudge J."/>
            <person name="Bharti A.K."/>
            <person name="Murray J.D."/>
            <person name="Naoumkina M.A."/>
            <person name="Rosen B."/>
            <person name="Silverstein K.A.T."/>
            <person name="Tang H."/>
            <person name="Rombauts S."/>
            <person name="Zhao P.X."/>
            <person name="Zhou P."/>
            <person name="Barbe V."/>
            <person name="Bardou P."/>
            <person name="Bechner M."/>
            <person name="Bellec A."/>
            <person name="Berger A."/>
            <person name="Berges H."/>
            <person name="Bidwell S."/>
            <person name="Bisseling T."/>
            <person name="Choisne N."/>
            <person name="Couloux A."/>
            <person name="Denny R."/>
            <person name="Deshpande S."/>
            <person name="Dai X."/>
            <person name="Doyle J.J."/>
            <person name="Dudez A.-M."/>
            <person name="Farmer A.D."/>
            <person name="Fouteau S."/>
            <person name="Franken C."/>
            <person name="Gibelin C."/>
            <person name="Gish J."/>
            <person name="Goldstein S."/>
            <person name="Gonzalez A.J."/>
            <person name="Green P.J."/>
            <person name="Hallab A."/>
            <person name="Hartog M."/>
            <person name="Hua A."/>
            <person name="Humphray S.J."/>
            <person name="Jeong D.-H."/>
            <person name="Jing Y."/>
            <person name="Jocker A."/>
            <person name="Kenton S.M."/>
            <person name="Kim D.-J."/>
            <person name="Klee K."/>
            <person name="Lai H."/>
            <person name="Lang C."/>
            <person name="Lin S."/>
            <person name="Macmil S.L."/>
            <person name="Magdelenat G."/>
            <person name="Matthews L."/>
            <person name="McCorrison J."/>
            <person name="Monaghan E.L."/>
            <person name="Mun J.-H."/>
            <person name="Najar F.Z."/>
            <person name="Nicholson C."/>
            <person name="Noirot C."/>
            <person name="O'Bleness M."/>
            <person name="Paule C.R."/>
            <person name="Poulain J."/>
            <person name="Prion F."/>
            <person name="Qin B."/>
            <person name="Qu C."/>
            <person name="Retzel E.F."/>
            <person name="Riddle C."/>
            <person name="Sallet E."/>
            <person name="Samain S."/>
            <person name="Samson N."/>
            <person name="Sanders I."/>
            <person name="Saurat O."/>
            <person name="Scarpelli C."/>
            <person name="Schiex T."/>
            <person name="Segurens B."/>
            <person name="Severin A.J."/>
            <person name="Sherrier D.J."/>
            <person name="Shi R."/>
            <person name="Sims S."/>
            <person name="Singer S.R."/>
            <person name="Sinharoy S."/>
            <person name="Sterck L."/>
            <person name="Viollet A."/>
            <person name="Wang B.-B."/>
            <person name="Wang K."/>
            <person name="Wang M."/>
            <person name="Wang X."/>
            <person name="Warfsmann J."/>
            <person name="Weissenbach J."/>
            <person name="White D.D."/>
            <person name="White J.D."/>
            <person name="Wiley G.B."/>
            <person name="Wincker P."/>
            <person name="Xing Y."/>
            <person name="Yang L."/>
            <person name="Yao Z."/>
            <person name="Ying F."/>
            <person name="Zhai J."/>
            <person name="Zhou L."/>
            <person name="Zuber A."/>
            <person name="Denarie J."/>
            <person name="Dixon R.A."/>
            <person name="May G.D."/>
            <person name="Schwartz D.C."/>
            <person name="Rogers J."/>
            <person name="Quetier F."/>
            <person name="Town C.D."/>
            <person name="Roe B.A."/>
        </authorList>
    </citation>
    <scope>NUCLEOTIDE SEQUENCE [LARGE SCALE GENOMIC DNA]</scope>
    <source>
        <strain>cv. Jemalong A17</strain>
    </source>
</reference>
<reference key="4">
    <citation type="journal article" date="2014" name="BMC Genomics">
        <title>An improved genome release (version Mt4.0) for the model legume Medicago truncatula.</title>
        <authorList>
            <person name="Tang H."/>
            <person name="Krishnakumar V."/>
            <person name="Bidwell S."/>
            <person name="Rosen B."/>
            <person name="Chan A."/>
            <person name="Zhou S."/>
            <person name="Gentzbittel L."/>
            <person name="Childs K.L."/>
            <person name="Yandell M."/>
            <person name="Gundlach H."/>
            <person name="Mayer K.F."/>
            <person name="Schwartz D.C."/>
            <person name="Town C.D."/>
        </authorList>
    </citation>
    <scope>GENOME REANNOTATION</scope>
    <source>
        <strain>cv. Jemalong A17</strain>
    </source>
</reference>
<reference key="5">
    <citation type="journal article" date="2018" name="Nat. Plants">
        <title>Whole-genome landscape of Medicago truncatula symbiotic genes.</title>
        <authorList>
            <person name="Pecrix Y."/>
            <person name="Staton S.E."/>
            <person name="Sallet E."/>
            <person name="Lelandais-Briere C."/>
            <person name="Moreau S."/>
            <person name="Carrere S."/>
            <person name="Blein T."/>
            <person name="Jardinaud M.F."/>
            <person name="Latrasse D."/>
            <person name="Zouine M."/>
            <person name="Zahm M."/>
            <person name="Kreplak J."/>
            <person name="Mayjonade B."/>
            <person name="Satge C."/>
            <person name="Perez M."/>
            <person name="Cauet S."/>
            <person name="Marande W."/>
            <person name="Chantry-Darmon C."/>
            <person name="Lopez-Roques C."/>
            <person name="Bouchez O."/>
            <person name="Berard A."/>
            <person name="Debelle F."/>
            <person name="Munos S."/>
            <person name="Bendahmane A."/>
            <person name="Berges H."/>
            <person name="Niebel A."/>
            <person name="Buitink J."/>
            <person name="Frugier F."/>
            <person name="Benhamed M."/>
            <person name="Crespi M."/>
            <person name="Gouzy J."/>
            <person name="Gamas P."/>
        </authorList>
    </citation>
    <scope>NUCLEOTIDE SEQUENCE [LARGE SCALE GENOMIC DNA]</scope>
    <source>
        <strain>cv. Jemalong A17</strain>
    </source>
</reference>
<name>LEC6_MEDTR</name>
<accession>A9YWS4</accession>
<accession>Q2PP77</accession>
<proteinExistence type="evidence at transcript level"/>
<comment type="function">
    <text evidence="6">May be involved in arbuscular mycorrhizal (AM) symbiosis with AM fungi.</text>
</comment>
<comment type="induction">
    <text evidence="3">Accumulates in roots during colonization by arbuscular mycorrhizal (AM) fungi (e.g. Glomus intraradices).</text>
</comment>
<comment type="similarity">
    <text evidence="5">Belongs to the leguminous lectin family.</text>
</comment>
<evidence type="ECO:0000255" key="1"/>
<evidence type="ECO:0000255" key="2">
    <source>
        <dbReference type="PROSITE-ProRule" id="PRU00498"/>
    </source>
</evidence>
<evidence type="ECO:0000269" key="3">
    <source>
    </source>
</evidence>
<evidence type="ECO:0000303" key="4">
    <source>
    </source>
</evidence>
<evidence type="ECO:0000305" key="5"/>
<evidence type="ECO:0000305" key="6">
    <source>
    </source>
</evidence>
<evidence type="ECO:0000312" key="7">
    <source>
        <dbReference type="EMBL" id="AES95925.1"/>
    </source>
</evidence>
<evidence type="ECO:0000312" key="8">
    <source>
        <dbReference type="EMBL" id="RHN54885.1"/>
    </source>
</evidence>
<dbReference type="EMBL" id="DQ314208">
    <property type="protein sequence ID" value="ABC47812.1"/>
    <property type="molecule type" value="mRNA"/>
</dbReference>
<dbReference type="EMBL" id="EU306659">
    <property type="protein sequence ID" value="ABY48150.1"/>
    <property type="molecule type" value="Genomic_DNA"/>
</dbReference>
<dbReference type="EMBL" id="CM001221">
    <property type="protein sequence ID" value="AES95925.1"/>
    <property type="molecule type" value="Genomic_DNA"/>
</dbReference>
<dbReference type="EMBL" id="PSQE01000005">
    <property type="protein sequence ID" value="RHN54885.1"/>
    <property type="molecule type" value="Genomic_DNA"/>
</dbReference>
<dbReference type="RefSeq" id="XP_003612967.1">
    <property type="nucleotide sequence ID" value="XM_003612919.1"/>
</dbReference>
<dbReference type="SMR" id="A9YWS4"/>
<dbReference type="STRING" id="3880.A9YWS4"/>
<dbReference type="GlyCosmos" id="A9YWS4">
    <property type="glycosylation" value="3 sites, No reported glycans"/>
</dbReference>
<dbReference type="PaxDb" id="3880-AES95925"/>
<dbReference type="EnsemblPlants" id="rna29983">
    <property type="protein sequence ID" value="RHN54885.1"/>
    <property type="gene ID" value="gene29983"/>
</dbReference>
<dbReference type="GeneID" id="11411930"/>
<dbReference type="Gramene" id="rna29983">
    <property type="protein sequence ID" value="RHN54885.1"/>
    <property type="gene ID" value="gene29983"/>
</dbReference>
<dbReference type="KEGG" id="mtr:11411930"/>
<dbReference type="eggNOG" id="ENOG502QTX3">
    <property type="taxonomic scope" value="Eukaryota"/>
</dbReference>
<dbReference type="HOGENOM" id="CLU_000288_62_2_1"/>
<dbReference type="OMA" id="SQYTHIG"/>
<dbReference type="OrthoDB" id="2014828at2759"/>
<dbReference type="Proteomes" id="UP000002051">
    <property type="component" value="Chromosome 5"/>
</dbReference>
<dbReference type="Proteomes" id="UP000265566">
    <property type="component" value="Chromosome 5"/>
</dbReference>
<dbReference type="GO" id="GO:0030246">
    <property type="term" value="F:carbohydrate binding"/>
    <property type="evidence" value="ECO:0007669"/>
    <property type="project" value="UniProtKB-KW"/>
</dbReference>
<dbReference type="GO" id="GO:0009610">
    <property type="term" value="P:response to symbiotic fungus"/>
    <property type="evidence" value="ECO:0000270"/>
    <property type="project" value="UniProtKB"/>
</dbReference>
<dbReference type="CDD" id="cd06899">
    <property type="entry name" value="lectin_legume_LecRK_Arcelin_ConA"/>
    <property type="match status" value="1"/>
</dbReference>
<dbReference type="Gene3D" id="2.60.120.200">
    <property type="match status" value="1"/>
</dbReference>
<dbReference type="InterPro" id="IPR013320">
    <property type="entry name" value="ConA-like_dom_sf"/>
</dbReference>
<dbReference type="InterPro" id="IPR016363">
    <property type="entry name" value="L-lectin"/>
</dbReference>
<dbReference type="InterPro" id="IPR000985">
    <property type="entry name" value="Lectin_LegA_CS"/>
</dbReference>
<dbReference type="InterPro" id="IPR001220">
    <property type="entry name" value="Legume_lectin_dom"/>
</dbReference>
<dbReference type="InterPro" id="IPR050258">
    <property type="entry name" value="Leguminous_Lectin"/>
</dbReference>
<dbReference type="PANTHER" id="PTHR32401">
    <property type="entry name" value="CONCANAVALIN A-LIKE LECTIN FAMILY PROTEIN"/>
    <property type="match status" value="1"/>
</dbReference>
<dbReference type="PANTHER" id="PTHR32401:SF31">
    <property type="entry name" value="LECTIN 6"/>
    <property type="match status" value="1"/>
</dbReference>
<dbReference type="Pfam" id="PF00139">
    <property type="entry name" value="Lectin_legB"/>
    <property type="match status" value="1"/>
</dbReference>
<dbReference type="PIRSF" id="PIRSF002690">
    <property type="entry name" value="L-type_lectin_plant"/>
    <property type="match status" value="1"/>
</dbReference>
<dbReference type="SUPFAM" id="SSF49899">
    <property type="entry name" value="Concanavalin A-like lectins/glucanases"/>
    <property type="match status" value="1"/>
</dbReference>
<dbReference type="PROSITE" id="PS00308">
    <property type="entry name" value="LECTIN_LEGUME_ALPHA"/>
    <property type="match status" value="1"/>
</dbReference>